<sequence>MNEKNKNDESKHQEDKLQDQKMWNRINKFFSRSIGQSAKRAPKPKAISKSQSFRILNRFNAMERNSIHMIVILSIISLLLILLLSPLMRFQKVEITGNHDLTKAEVLAASGINKKIPAWQLLSEQHYFIQRAEKNSQIKKVKISYLNMQVAQIKIEENSKVGLVTKKDKNYYILADGKFIPAQSVGEKPQRLPNYEKFPNDKTIKRVAMQFNGISKALQNSVSEVIWSPDHEDDEKVILIMDDGNKVLIKASDIKNKLKYYPGMVAQIDKNGTFNFQVGTYFQQY</sequence>
<protein>
    <recommendedName>
        <fullName evidence="1">Cell division protein DivIB</fullName>
    </recommendedName>
</protein>
<gene>
    <name evidence="1" type="primary">divIB</name>
    <name type="ordered locus">WKK_01225</name>
</gene>
<feature type="chain" id="PRO_0000414793" description="Cell division protein DivIB">
    <location>
        <begin position="1"/>
        <end position="285"/>
    </location>
</feature>
<feature type="topological domain" description="Cytoplasmic" evidence="1">
    <location>
        <begin position="1"/>
        <end position="66"/>
    </location>
</feature>
<feature type="transmembrane region" description="Helical" evidence="1">
    <location>
        <begin position="67"/>
        <end position="87"/>
    </location>
</feature>
<feature type="topological domain" description="Extracellular" evidence="1">
    <location>
        <begin position="88"/>
        <end position="285"/>
    </location>
</feature>
<feature type="domain" description="POTRA" evidence="2">
    <location>
        <begin position="88"/>
        <end position="158"/>
    </location>
</feature>
<feature type="region of interest" description="Disordered" evidence="3">
    <location>
        <begin position="1"/>
        <end position="20"/>
    </location>
</feature>
<feature type="compositionally biased region" description="Basic and acidic residues" evidence="3">
    <location>
        <begin position="1"/>
        <end position="19"/>
    </location>
</feature>
<comment type="function">
    <text evidence="1">Cell division protein that may be involved in stabilizing or promoting the assembly of the division complex.</text>
</comment>
<comment type="subcellular location">
    <subcellularLocation>
        <location evidence="1">Cell membrane</location>
        <topology evidence="1">Single-pass type II membrane protein</topology>
    </subcellularLocation>
    <text evidence="1">Localizes to the division septum.</text>
</comment>
<comment type="similarity">
    <text evidence="1">Belongs to the FtsQ/DivIB family. DivIB subfamily.</text>
</comment>
<name>DIVIB_WEIKK</name>
<accession>F8HZP7</accession>
<evidence type="ECO:0000255" key="1">
    <source>
        <dbReference type="HAMAP-Rule" id="MF_00912"/>
    </source>
</evidence>
<evidence type="ECO:0000255" key="2">
    <source>
        <dbReference type="PROSITE-ProRule" id="PRU01115"/>
    </source>
</evidence>
<evidence type="ECO:0000256" key="3">
    <source>
        <dbReference type="SAM" id="MobiDB-lite"/>
    </source>
</evidence>
<dbReference type="EMBL" id="CP002899">
    <property type="protein sequence ID" value="AEJ23121.1"/>
    <property type="molecule type" value="Genomic_DNA"/>
</dbReference>
<dbReference type="RefSeq" id="WP_006845633.1">
    <property type="nucleotide sequence ID" value="NC_015759.1"/>
</dbReference>
<dbReference type="STRING" id="1045854.WKK_01225"/>
<dbReference type="KEGG" id="wko:WKK_01225"/>
<dbReference type="eggNOG" id="COG1589">
    <property type="taxonomic scope" value="Bacteria"/>
</dbReference>
<dbReference type="HOGENOM" id="CLU_046278_0_1_9"/>
<dbReference type="GO" id="GO:0032153">
    <property type="term" value="C:cell division site"/>
    <property type="evidence" value="ECO:0007669"/>
    <property type="project" value="UniProtKB-UniRule"/>
</dbReference>
<dbReference type="GO" id="GO:0005886">
    <property type="term" value="C:plasma membrane"/>
    <property type="evidence" value="ECO:0007669"/>
    <property type="project" value="UniProtKB-SubCell"/>
</dbReference>
<dbReference type="GO" id="GO:0043093">
    <property type="term" value="P:FtsZ-dependent cytokinesis"/>
    <property type="evidence" value="ECO:0007669"/>
    <property type="project" value="UniProtKB-UniRule"/>
</dbReference>
<dbReference type="Gene3D" id="3.40.50.10960">
    <property type="match status" value="1"/>
</dbReference>
<dbReference type="HAMAP" id="MF_00912">
    <property type="entry name" value="DivIB"/>
    <property type="match status" value="1"/>
</dbReference>
<dbReference type="InterPro" id="IPR026580">
    <property type="entry name" value="DivIB"/>
</dbReference>
<dbReference type="InterPro" id="IPR050487">
    <property type="entry name" value="FtsQ_DivIB"/>
</dbReference>
<dbReference type="InterPro" id="IPR034746">
    <property type="entry name" value="POTRA"/>
</dbReference>
<dbReference type="InterPro" id="IPR013685">
    <property type="entry name" value="POTRA_FtsQ_type"/>
</dbReference>
<dbReference type="PANTHER" id="PTHR37820">
    <property type="entry name" value="CELL DIVISION PROTEIN DIVIB"/>
    <property type="match status" value="1"/>
</dbReference>
<dbReference type="PANTHER" id="PTHR37820:SF1">
    <property type="entry name" value="CELL DIVISION PROTEIN FTSQ"/>
    <property type="match status" value="1"/>
</dbReference>
<dbReference type="Pfam" id="PF08478">
    <property type="entry name" value="POTRA_1"/>
    <property type="match status" value="1"/>
</dbReference>
<dbReference type="PROSITE" id="PS51779">
    <property type="entry name" value="POTRA"/>
    <property type="match status" value="1"/>
</dbReference>
<proteinExistence type="inferred from homology"/>
<keyword id="KW-0131">Cell cycle</keyword>
<keyword id="KW-0132">Cell division</keyword>
<keyword id="KW-1003">Cell membrane</keyword>
<keyword id="KW-0472">Membrane</keyword>
<keyword id="KW-0812">Transmembrane</keyword>
<keyword id="KW-1133">Transmembrane helix</keyword>
<reference key="1">
    <citation type="journal article" date="2011" name="J. Bacteriol.">
        <title>Complete genome sequence of Weissella koreensis KACC 15510, isolated from Kimchi.</title>
        <authorList>
            <person name="Lee S.H."/>
            <person name="Jung J.Y."/>
            <person name="Lee S.H."/>
            <person name="Jeon C.O."/>
        </authorList>
    </citation>
    <scope>NUCLEOTIDE SEQUENCE [LARGE SCALE GENOMIC DNA]</scope>
    <source>
        <strain>KACC 15510</strain>
    </source>
</reference>
<organism>
    <name type="scientific">Weissella koreensis (strain KACC 15510)</name>
    <dbReference type="NCBI Taxonomy" id="1045854"/>
    <lineage>
        <taxon>Bacteria</taxon>
        <taxon>Bacillati</taxon>
        <taxon>Bacillota</taxon>
        <taxon>Bacilli</taxon>
        <taxon>Lactobacillales</taxon>
        <taxon>Lactobacillaceae</taxon>
        <taxon>Weissella</taxon>
    </lineage>
</organism>